<gene>
    <name type="primary">RGL1</name>
    <name type="synonym">KIAA0959</name>
    <name type="synonym">RGL</name>
</gene>
<feature type="chain" id="PRO_0000068885" description="Ral guanine nucleotide dissociation stimulator-like 1">
    <location>
        <begin position="1"/>
        <end position="768"/>
    </location>
</feature>
<feature type="domain" description="N-terminal Ras-GEF" evidence="3">
    <location>
        <begin position="65"/>
        <end position="196"/>
    </location>
</feature>
<feature type="domain" description="Ras-GEF" evidence="5">
    <location>
        <begin position="232"/>
        <end position="501"/>
    </location>
</feature>
<feature type="domain" description="Ras-associating" evidence="4">
    <location>
        <begin position="648"/>
        <end position="735"/>
    </location>
</feature>
<feature type="region of interest" description="Disordered" evidence="6">
    <location>
        <begin position="528"/>
        <end position="623"/>
    </location>
</feature>
<feature type="compositionally biased region" description="Low complexity" evidence="6">
    <location>
        <begin position="541"/>
        <end position="561"/>
    </location>
</feature>
<feature type="compositionally biased region" description="Low complexity" evidence="6">
    <location>
        <begin position="586"/>
        <end position="596"/>
    </location>
</feature>
<feature type="compositionally biased region" description="Low complexity" evidence="6">
    <location>
        <begin position="605"/>
        <end position="621"/>
    </location>
</feature>
<feature type="modified residue" description="Phosphoserine" evidence="2">
    <location>
        <position position="520"/>
    </location>
</feature>
<feature type="splice variant" id="VSP_001824" description="In isoform B." evidence="8 9">
    <original>MKLLWQAKM</original>
    <variation>MEVKPVGEPTQEVSKFKLSTKVESTGHWLVEDHVRIWEVLKTEE</variation>
    <location>
        <begin position="1"/>
        <end position="9"/>
    </location>
</feature>
<feature type="sequence variant" id="VAR_035823" description="In a breast cancer sample; somatic mutation." evidence="7">
    <original>Y</original>
    <variation>S</variation>
    <location>
        <position position="174"/>
    </location>
</feature>
<feature type="sequence variant" id="VAR_035824" description="In a breast cancer sample; somatic mutation." evidence="7">
    <original>V</original>
    <variation>M</variation>
    <location>
        <position position="699"/>
    </location>
</feature>
<feature type="sequence conflict" description="In Ref. 6." evidence="10" ref="6">
    <original>W</original>
    <variation>G</variation>
    <location>
        <position position="15"/>
    </location>
</feature>
<feature type="sequence conflict" description="In Ref. 6." evidence="10" ref="6">
    <original>N</original>
    <variation>Y</variation>
    <location>
        <position position="687"/>
    </location>
</feature>
<feature type="sequence conflict" description="In Ref. 1; AAF67281." evidence="10" ref="1">
    <original>N</original>
    <variation>Y</variation>
    <location>
        <position position="761"/>
    </location>
</feature>
<feature type="strand" evidence="12">
    <location>
        <begin position="649"/>
        <end position="654"/>
    </location>
</feature>
<feature type="strand" evidence="12">
    <location>
        <begin position="660"/>
        <end position="670"/>
    </location>
</feature>
<feature type="helix" evidence="12">
    <location>
        <begin position="675"/>
        <end position="685"/>
    </location>
</feature>
<feature type="helix" evidence="12">
    <location>
        <begin position="693"/>
        <end position="695"/>
    </location>
</feature>
<feature type="strand" evidence="12">
    <location>
        <begin position="698"/>
        <end position="701"/>
    </location>
</feature>
<feature type="strand" evidence="12">
    <location>
        <begin position="703"/>
        <end position="705"/>
    </location>
</feature>
<feature type="strand" evidence="12">
    <location>
        <begin position="707"/>
        <end position="710"/>
    </location>
</feature>
<feature type="helix" evidence="12">
    <location>
        <begin position="716"/>
        <end position="719"/>
    </location>
</feature>
<feature type="strand" evidence="11">
    <location>
        <begin position="727"/>
        <end position="732"/>
    </location>
</feature>
<dbReference type="EMBL" id="AF186779">
    <property type="protein sequence ID" value="AAF67280.1"/>
    <property type="molecule type" value="mRNA"/>
</dbReference>
<dbReference type="EMBL" id="AF186780">
    <property type="protein sequence ID" value="AAF67281.1"/>
    <property type="molecule type" value="mRNA"/>
</dbReference>
<dbReference type="EMBL" id="AF186798">
    <property type="protein sequence ID" value="AAG14400.1"/>
    <property type="molecule type" value="Genomic_DNA"/>
</dbReference>
<dbReference type="EMBL" id="AF186781">
    <property type="protein sequence ID" value="AAG14400.1"/>
    <property type="status" value="JOINED"/>
    <property type="molecule type" value="Genomic_DNA"/>
</dbReference>
<dbReference type="EMBL" id="AF186783">
    <property type="protein sequence ID" value="AAG14400.1"/>
    <property type="status" value="JOINED"/>
    <property type="molecule type" value="Genomic_DNA"/>
</dbReference>
<dbReference type="EMBL" id="AF186784">
    <property type="protein sequence ID" value="AAG14400.1"/>
    <property type="status" value="JOINED"/>
    <property type="molecule type" value="Genomic_DNA"/>
</dbReference>
<dbReference type="EMBL" id="AF186785">
    <property type="protein sequence ID" value="AAG14400.1"/>
    <property type="status" value="JOINED"/>
    <property type="molecule type" value="Genomic_DNA"/>
</dbReference>
<dbReference type="EMBL" id="AF186786">
    <property type="protein sequence ID" value="AAG14400.1"/>
    <property type="status" value="JOINED"/>
    <property type="molecule type" value="Genomic_DNA"/>
</dbReference>
<dbReference type="EMBL" id="AF186787">
    <property type="protein sequence ID" value="AAG14400.1"/>
    <property type="status" value="JOINED"/>
    <property type="molecule type" value="Genomic_DNA"/>
</dbReference>
<dbReference type="EMBL" id="AF186788">
    <property type="protein sequence ID" value="AAG14400.1"/>
    <property type="status" value="JOINED"/>
    <property type="molecule type" value="Genomic_DNA"/>
</dbReference>
<dbReference type="EMBL" id="AF186789">
    <property type="protein sequence ID" value="AAG14400.1"/>
    <property type="status" value="JOINED"/>
    <property type="molecule type" value="Genomic_DNA"/>
</dbReference>
<dbReference type="EMBL" id="AF186790">
    <property type="protein sequence ID" value="AAG14400.1"/>
    <property type="status" value="JOINED"/>
    <property type="molecule type" value="Genomic_DNA"/>
</dbReference>
<dbReference type="EMBL" id="AF186791">
    <property type="protein sequence ID" value="AAG14400.1"/>
    <property type="status" value="JOINED"/>
    <property type="molecule type" value="Genomic_DNA"/>
</dbReference>
<dbReference type="EMBL" id="AF186792">
    <property type="protein sequence ID" value="AAG14400.1"/>
    <property type="status" value="JOINED"/>
    <property type="molecule type" value="Genomic_DNA"/>
</dbReference>
<dbReference type="EMBL" id="AF186793">
    <property type="protein sequence ID" value="AAG14400.1"/>
    <property type="status" value="JOINED"/>
    <property type="molecule type" value="Genomic_DNA"/>
</dbReference>
<dbReference type="EMBL" id="AF186794">
    <property type="protein sequence ID" value="AAG14400.1"/>
    <property type="status" value="JOINED"/>
    <property type="molecule type" value="Genomic_DNA"/>
</dbReference>
<dbReference type="EMBL" id="AF186795">
    <property type="protein sequence ID" value="AAG14400.1"/>
    <property type="status" value="JOINED"/>
    <property type="molecule type" value="Genomic_DNA"/>
</dbReference>
<dbReference type="EMBL" id="AF186796">
    <property type="protein sequence ID" value="AAG14400.1"/>
    <property type="status" value="JOINED"/>
    <property type="molecule type" value="Genomic_DNA"/>
</dbReference>
<dbReference type="EMBL" id="AF186797">
    <property type="protein sequence ID" value="AAG14400.1"/>
    <property type="status" value="JOINED"/>
    <property type="molecule type" value="Genomic_DNA"/>
</dbReference>
<dbReference type="EMBL" id="AF186798">
    <property type="protein sequence ID" value="AAG14401.1"/>
    <property type="molecule type" value="Genomic_DNA"/>
</dbReference>
<dbReference type="EMBL" id="AF192520">
    <property type="protein sequence ID" value="AAG14401.1"/>
    <property type="status" value="JOINED"/>
    <property type="molecule type" value="Genomic_DNA"/>
</dbReference>
<dbReference type="EMBL" id="AF186783">
    <property type="protein sequence ID" value="AAG14401.1"/>
    <property type="status" value="JOINED"/>
    <property type="molecule type" value="Genomic_DNA"/>
</dbReference>
<dbReference type="EMBL" id="AF186784">
    <property type="protein sequence ID" value="AAG14401.1"/>
    <property type="status" value="JOINED"/>
    <property type="molecule type" value="Genomic_DNA"/>
</dbReference>
<dbReference type="EMBL" id="AF186785">
    <property type="protein sequence ID" value="AAG14401.1"/>
    <property type="status" value="JOINED"/>
    <property type="molecule type" value="Genomic_DNA"/>
</dbReference>
<dbReference type="EMBL" id="AF186786">
    <property type="protein sequence ID" value="AAG14401.1"/>
    <property type="status" value="JOINED"/>
    <property type="molecule type" value="Genomic_DNA"/>
</dbReference>
<dbReference type="EMBL" id="AF186787">
    <property type="protein sequence ID" value="AAG14401.1"/>
    <property type="status" value="JOINED"/>
    <property type="molecule type" value="Genomic_DNA"/>
</dbReference>
<dbReference type="EMBL" id="AF186788">
    <property type="protein sequence ID" value="AAG14401.1"/>
    <property type="status" value="JOINED"/>
    <property type="molecule type" value="Genomic_DNA"/>
</dbReference>
<dbReference type="EMBL" id="AF186789">
    <property type="protein sequence ID" value="AAG14401.1"/>
    <property type="status" value="JOINED"/>
    <property type="molecule type" value="Genomic_DNA"/>
</dbReference>
<dbReference type="EMBL" id="AF186790">
    <property type="protein sequence ID" value="AAG14401.1"/>
    <property type="status" value="JOINED"/>
    <property type="molecule type" value="Genomic_DNA"/>
</dbReference>
<dbReference type="EMBL" id="AF186791">
    <property type="protein sequence ID" value="AAG14401.1"/>
    <property type="status" value="JOINED"/>
    <property type="molecule type" value="Genomic_DNA"/>
</dbReference>
<dbReference type="EMBL" id="AF186792">
    <property type="protein sequence ID" value="AAG14401.1"/>
    <property type="status" value="JOINED"/>
    <property type="molecule type" value="Genomic_DNA"/>
</dbReference>
<dbReference type="EMBL" id="AF186793">
    <property type="protein sequence ID" value="AAG14401.1"/>
    <property type="status" value="JOINED"/>
    <property type="molecule type" value="Genomic_DNA"/>
</dbReference>
<dbReference type="EMBL" id="AF186794">
    <property type="protein sequence ID" value="AAG14401.1"/>
    <property type="status" value="JOINED"/>
    <property type="molecule type" value="Genomic_DNA"/>
</dbReference>
<dbReference type="EMBL" id="AF186795">
    <property type="protein sequence ID" value="AAG14401.1"/>
    <property type="status" value="JOINED"/>
    <property type="molecule type" value="Genomic_DNA"/>
</dbReference>
<dbReference type="EMBL" id="AF186796">
    <property type="protein sequence ID" value="AAG14401.1"/>
    <property type="status" value="JOINED"/>
    <property type="molecule type" value="Genomic_DNA"/>
</dbReference>
<dbReference type="EMBL" id="AF186797">
    <property type="protein sequence ID" value="AAG14401.1"/>
    <property type="status" value="JOINED"/>
    <property type="molecule type" value="Genomic_DNA"/>
</dbReference>
<dbReference type="EMBL" id="AB023176">
    <property type="protein sequence ID" value="BAA76803.1"/>
    <property type="status" value="ALT_INIT"/>
    <property type="molecule type" value="mRNA"/>
</dbReference>
<dbReference type="EMBL" id="AL590422">
    <property type="status" value="NOT_ANNOTATED_CDS"/>
    <property type="molecule type" value="Genomic_DNA"/>
</dbReference>
<dbReference type="EMBL" id="AL592299">
    <property type="status" value="NOT_ANNOTATED_CDS"/>
    <property type="molecule type" value="Genomic_DNA"/>
</dbReference>
<dbReference type="EMBL" id="CH471067">
    <property type="protein sequence ID" value="EAW91166.1"/>
    <property type="molecule type" value="Genomic_DNA"/>
</dbReference>
<dbReference type="EMBL" id="CH471067">
    <property type="protein sequence ID" value="EAW91167.1"/>
    <property type="molecule type" value="Genomic_DNA"/>
</dbReference>
<dbReference type="EMBL" id="BC136591">
    <property type="protein sequence ID" value="AAI36592.1"/>
    <property type="molecule type" value="mRNA"/>
</dbReference>
<dbReference type="EMBL" id="AL080117">
    <property type="protein sequence ID" value="CAB45716.1"/>
    <property type="molecule type" value="mRNA"/>
</dbReference>
<dbReference type="CCDS" id="CCDS1359.1">
    <molecule id="Q9NZL6-2"/>
</dbReference>
<dbReference type="CCDS" id="CCDS72992.1">
    <molecule id="Q9NZL6-1"/>
</dbReference>
<dbReference type="PIR" id="T12453">
    <property type="entry name" value="T12453"/>
</dbReference>
<dbReference type="RefSeq" id="NP_001284598.1">
    <property type="nucleotide sequence ID" value="NM_001297669.1"/>
</dbReference>
<dbReference type="RefSeq" id="NP_001284599.1">
    <property type="nucleotide sequence ID" value="NM_001297670.1"/>
</dbReference>
<dbReference type="RefSeq" id="NP_001284600.1">
    <molecule id="Q9NZL6-1"/>
    <property type="nucleotide sequence ID" value="NM_001297671.3"/>
</dbReference>
<dbReference type="RefSeq" id="NP_001284601.1">
    <property type="nucleotide sequence ID" value="NM_001297672.1"/>
</dbReference>
<dbReference type="RefSeq" id="NP_055964.3">
    <molecule id="Q9NZL6-2"/>
    <property type="nucleotide sequence ID" value="NM_015149.4"/>
</dbReference>
<dbReference type="RefSeq" id="XP_011507641.1">
    <molecule id="Q9NZL6-2"/>
    <property type="nucleotide sequence ID" value="XM_011509339.4"/>
</dbReference>
<dbReference type="RefSeq" id="XP_047271633.1">
    <molecule id="Q9NZL6-2"/>
    <property type="nucleotide sequence ID" value="XM_047415677.1"/>
</dbReference>
<dbReference type="RefSeq" id="XP_054191340.1">
    <molecule id="Q9NZL6-2"/>
    <property type="nucleotide sequence ID" value="XM_054335365.1"/>
</dbReference>
<dbReference type="RefSeq" id="XP_054191341.1">
    <molecule id="Q9NZL6-2"/>
    <property type="nucleotide sequence ID" value="XM_054335366.1"/>
</dbReference>
<dbReference type="PDB" id="7SCW">
    <property type="method" value="X-ray"/>
    <property type="resolution" value="1.98 A"/>
    <property type="chains" value="B=644-736"/>
</dbReference>
<dbReference type="PDB" id="7SCX">
    <property type="method" value="X-ray"/>
    <property type="resolution" value="1.96 A"/>
    <property type="chains" value="B=644-736"/>
</dbReference>
<dbReference type="PDBsum" id="7SCW"/>
<dbReference type="PDBsum" id="7SCX"/>
<dbReference type="SMR" id="Q9NZL6"/>
<dbReference type="BioGRID" id="116791">
    <property type="interactions" value="16"/>
</dbReference>
<dbReference type="DIP" id="DIP-31372N"/>
<dbReference type="FunCoup" id="Q9NZL6">
    <property type="interactions" value="851"/>
</dbReference>
<dbReference type="IntAct" id="Q9NZL6">
    <property type="interactions" value="12"/>
</dbReference>
<dbReference type="STRING" id="9606.ENSP00000303192"/>
<dbReference type="iPTMnet" id="Q9NZL6"/>
<dbReference type="PhosphoSitePlus" id="Q9NZL6"/>
<dbReference type="BioMuta" id="RGL1"/>
<dbReference type="DMDM" id="14548230"/>
<dbReference type="jPOST" id="Q9NZL6"/>
<dbReference type="MassIVE" id="Q9NZL6"/>
<dbReference type="PaxDb" id="9606-ENSP00000303192"/>
<dbReference type="PeptideAtlas" id="Q9NZL6"/>
<dbReference type="ProteomicsDB" id="83430">
    <molecule id="Q9NZL6-1"/>
</dbReference>
<dbReference type="ProteomicsDB" id="83431">
    <molecule id="Q9NZL6-2"/>
</dbReference>
<dbReference type="Antibodypedia" id="20603">
    <property type="antibodies" value="138 antibodies from 28 providers"/>
</dbReference>
<dbReference type="DNASU" id="23179"/>
<dbReference type="Ensembl" id="ENST00000304685.8">
    <molecule id="Q9NZL6-2"/>
    <property type="protein sequence ID" value="ENSP00000303192.3"/>
    <property type="gene ID" value="ENSG00000143344.16"/>
</dbReference>
<dbReference type="Ensembl" id="ENST00000360851.4">
    <molecule id="Q9NZL6-1"/>
    <property type="protein sequence ID" value="ENSP00000354097.3"/>
    <property type="gene ID" value="ENSG00000143344.16"/>
</dbReference>
<dbReference type="GeneID" id="23179"/>
<dbReference type="KEGG" id="hsa:23179"/>
<dbReference type="MANE-Select" id="ENST00000360851.4">
    <property type="protein sequence ID" value="ENSP00000354097.3"/>
    <property type="RefSeq nucleotide sequence ID" value="NM_001297671.3"/>
    <property type="RefSeq protein sequence ID" value="NP_001284600.1"/>
</dbReference>
<dbReference type="UCSC" id="uc001gqm.4">
    <molecule id="Q9NZL6-1"/>
    <property type="organism name" value="human"/>
</dbReference>
<dbReference type="AGR" id="HGNC:30281"/>
<dbReference type="CTD" id="23179"/>
<dbReference type="DisGeNET" id="23179"/>
<dbReference type="GeneCards" id="RGL1"/>
<dbReference type="HGNC" id="HGNC:30281">
    <property type="gene designation" value="RGL1"/>
</dbReference>
<dbReference type="HPA" id="ENSG00000143344">
    <property type="expression patterns" value="Low tissue specificity"/>
</dbReference>
<dbReference type="MIM" id="605667">
    <property type="type" value="gene"/>
</dbReference>
<dbReference type="neXtProt" id="NX_Q9NZL6"/>
<dbReference type="OpenTargets" id="ENSG00000143344"/>
<dbReference type="PharmGKB" id="PA134934636"/>
<dbReference type="VEuPathDB" id="HostDB:ENSG00000143344"/>
<dbReference type="eggNOG" id="KOG3629">
    <property type="taxonomic scope" value="Eukaryota"/>
</dbReference>
<dbReference type="GeneTree" id="ENSGT00940000156012"/>
<dbReference type="HOGENOM" id="CLU_010252_0_1_1"/>
<dbReference type="InParanoid" id="Q9NZL6"/>
<dbReference type="OMA" id="DSCMVYD"/>
<dbReference type="OrthoDB" id="26687at2759"/>
<dbReference type="PAN-GO" id="Q9NZL6">
    <property type="GO annotations" value="4 GO annotations based on evolutionary models"/>
</dbReference>
<dbReference type="PhylomeDB" id="Q9NZL6"/>
<dbReference type="TreeFam" id="TF315204"/>
<dbReference type="PathwayCommons" id="Q9NZL6"/>
<dbReference type="Reactome" id="R-HSA-1989781">
    <property type="pathway name" value="PPARA activates gene expression"/>
</dbReference>
<dbReference type="Reactome" id="R-HSA-5673001">
    <property type="pathway name" value="RAF/MAP kinase cascade"/>
</dbReference>
<dbReference type="SignaLink" id="Q9NZL6"/>
<dbReference type="BioGRID-ORCS" id="23179">
    <property type="hits" value="8 hits in 1145 CRISPR screens"/>
</dbReference>
<dbReference type="ChiTaRS" id="RGL1">
    <property type="organism name" value="human"/>
</dbReference>
<dbReference type="GenomeRNAi" id="23179"/>
<dbReference type="Pharos" id="Q9NZL6">
    <property type="development level" value="Tbio"/>
</dbReference>
<dbReference type="PRO" id="PR:Q9NZL6"/>
<dbReference type="Proteomes" id="UP000005640">
    <property type="component" value="Chromosome 1"/>
</dbReference>
<dbReference type="RNAct" id="Q9NZL6">
    <property type="molecule type" value="protein"/>
</dbReference>
<dbReference type="Bgee" id="ENSG00000143344">
    <property type="expression patterns" value="Expressed in endothelial cell and 205 other cell types or tissues"/>
</dbReference>
<dbReference type="GO" id="GO:0005829">
    <property type="term" value="C:cytosol"/>
    <property type="evidence" value="ECO:0000304"/>
    <property type="project" value="Reactome"/>
</dbReference>
<dbReference type="GO" id="GO:0005886">
    <property type="term" value="C:plasma membrane"/>
    <property type="evidence" value="ECO:0000318"/>
    <property type="project" value="GO_Central"/>
</dbReference>
<dbReference type="GO" id="GO:0005085">
    <property type="term" value="F:guanyl-nucleotide exchange factor activity"/>
    <property type="evidence" value="ECO:0000318"/>
    <property type="project" value="GO_Central"/>
</dbReference>
<dbReference type="GO" id="GO:0007265">
    <property type="term" value="P:Ras protein signal transduction"/>
    <property type="evidence" value="ECO:0000318"/>
    <property type="project" value="GO_Central"/>
</dbReference>
<dbReference type="GO" id="GO:0007264">
    <property type="term" value="P:small GTPase-mediated signal transduction"/>
    <property type="evidence" value="ECO:0000303"/>
    <property type="project" value="UniProtKB"/>
</dbReference>
<dbReference type="CDD" id="cd17210">
    <property type="entry name" value="RA_RGL"/>
    <property type="match status" value="1"/>
</dbReference>
<dbReference type="CDD" id="cd00155">
    <property type="entry name" value="RasGEF"/>
    <property type="match status" value="1"/>
</dbReference>
<dbReference type="CDD" id="cd06224">
    <property type="entry name" value="REM"/>
    <property type="match status" value="1"/>
</dbReference>
<dbReference type="FunFam" id="1.10.840.10:FF:000005">
    <property type="entry name" value="Ral guanine nucleotide dissociation stimulator isoform 1"/>
    <property type="match status" value="1"/>
</dbReference>
<dbReference type="FunFam" id="1.20.870.10:FF:000003">
    <property type="entry name" value="Ral guanine nucleotide dissociation stimulator isoform 1"/>
    <property type="match status" value="1"/>
</dbReference>
<dbReference type="FunFam" id="3.10.20.90:FF:000042">
    <property type="entry name" value="Ral guanine nucleotide dissociation stimulator isoform 1"/>
    <property type="match status" value="1"/>
</dbReference>
<dbReference type="Gene3D" id="3.10.20.90">
    <property type="entry name" value="Phosphatidylinositol 3-kinase Catalytic Subunit, Chain A, domain 1"/>
    <property type="match status" value="1"/>
</dbReference>
<dbReference type="Gene3D" id="1.10.840.10">
    <property type="entry name" value="Ras guanine-nucleotide exchange factors catalytic domain"/>
    <property type="match status" value="1"/>
</dbReference>
<dbReference type="Gene3D" id="1.20.870.10">
    <property type="entry name" value="Son of sevenless (SoS) protein Chain: S domain 1"/>
    <property type="match status" value="1"/>
</dbReference>
<dbReference type="InterPro" id="IPR000159">
    <property type="entry name" value="RA_dom"/>
</dbReference>
<dbReference type="InterPro" id="IPR008937">
    <property type="entry name" value="Ras-like_GEF"/>
</dbReference>
<dbReference type="InterPro" id="IPR000651">
    <property type="entry name" value="Ras-like_Gua-exchang_fac_N"/>
</dbReference>
<dbReference type="InterPro" id="IPR019804">
    <property type="entry name" value="Ras_G-nucl-exch_fac_CS"/>
</dbReference>
<dbReference type="InterPro" id="IPR023578">
    <property type="entry name" value="Ras_GEF_dom_sf"/>
</dbReference>
<dbReference type="InterPro" id="IPR001895">
    <property type="entry name" value="RASGEF_cat_dom"/>
</dbReference>
<dbReference type="InterPro" id="IPR036964">
    <property type="entry name" value="RASGEF_cat_dom_sf"/>
</dbReference>
<dbReference type="InterPro" id="IPR030748">
    <property type="entry name" value="RGL1_RA"/>
</dbReference>
<dbReference type="InterPro" id="IPR029071">
    <property type="entry name" value="Ubiquitin-like_domsf"/>
</dbReference>
<dbReference type="PANTHER" id="PTHR23113">
    <property type="entry name" value="GUANINE NUCLEOTIDE EXCHANGE FACTOR"/>
    <property type="match status" value="1"/>
</dbReference>
<dbReference type="PANTHER" id="PTHR23113:SF199">
    <property type="entry name" value="RAL GUANINE NUCLEOTIDE DISSOCIATION STIMULATOR-LIKE 1"/>
    <property type="match status" value="1"/>
</dbReference>
<dbReference type="Pfam" id="PF00788">
    <property type="entry name" value="RA"/>
    <property type="match status" value="1"/>
</dbReference>
<dbReference type="Pfam" id="PF00617">
    <property type="entry name" value="RasGEF"/>
    <property type="match status" value="1"/>
</dbReference>
<dbReference type="Pfam" id="PF00618">
    <property type="entry name" value="RasGEF_N"/>
    <property type="match status" value="1"/>
</dbReference>
<dbReference type="SMART" id="SM00314">
    <property type="entry name" value="RA"/>
    <property type="match status" value="1"/>
</dbReference>
<dbReference type="SMART" id="SM00147">
    <property type="entry name" value="RasGEF"/>
    <property type="match status" value="1"/>
</dbReference>
<dbReference type="SMART" id="SM00229">
    <property type="entry name" value="RasGEFN"/>
    <property type="match status" value="1"/>
</dbReference>
<dbReference type="SUPFAM" id="SSF48366">
    <property type="entry name" value="Ras GEF"/>
    <property type="match status" value="1"/>
</dbReference>
<dbReference type="SUPFAM" id="SSF54236">
    <property type="entry name" value="Ubiquitin-like"/>
    <property type="match status" value="1"/>
</dbReference>
<dbReference type="PROSITE" id="PS50200">
    <property type="entry name" value="RA"/>
    <property type="match status" value="1"/>
</dbReference>
<dbReference type="PROSITE" id="PS00720">
    <property type="entry name" value="RASGEF"/>
    <property type="match status" value="1"/>
</dbReference>
<dbReference type="PROSITE" id="PS50009">
    <property type="entry name" value="RASGEF_CAT"/>
    <property type="match status" value="1"/>
</dbReference>
<dbReference type="PROSITE" id="PS50212">
    <property type="entry name" value="RASGEF_NTER"/>
    <property type="match status" value="1"/>
</dbReference>
<keyword id="KW-0002">3D-structure</keyword>
<keyword id="KW-0025">Alternative splicing</keyword>
<keyword id="KW-0344">Guanine-nucleotide releasing factor</keyword>
<keyword id="KW-0597">Phosphoprotein</keyword>
<keyword id="KW-1267">Proteomics identification</keyword>
<keyword id="KW-1185">Reference proteome</keyword>
<comment type="function">
    <text>Probable guanine nucleotide exchange factor.</text>
</comment>
<comment type="subunit">
    <text evidence="1">Interacts with Ras.</text>
</comment>
<comment type="interaction">
    <interactant intactId="EBI-365926">
        <id>Q9NZL6</id>
    </interactant>
    <interactant intactId="EBI-350145">
        <id>P01112</id>
        <label>HRAS</label>
    </interactant>
    <organismsDiffer>false</organismsDiffer>
    <experiments>4</experiments>
</comment>
<comment type="interaction">
    <interactant intactId="EBI-23868346">
        <id>Q9NZL6-2</id>
    </interactant>
    <interactant intactId="EBI-602366">
        <id>P10114</id>
        <label>RAP2A</label>
    </interactant>
    <organismsDiffer>false</organismsDiffer>
    <experiments>3</experiments>
</comment>
<comment type="alternative products">
    <event type="alternative splicing"/>
    <isoform>
        <id>Q9NZL6-1</id>
        <name>A</name>
        <sequence type="displayed"/>
    </isoform>
    <isoform>
        <id>Q9NZL6-2</id>
        <name>B</name>
        <sequence type="described" ref="VSP_001824"/>
    </isoform>
</comment>
<comment type="tissue specificity">
    <text>Expressed in a wide variety of tissues with strong expression being seen in the heart, brain, kidney, spleen and testis.</text>
</comment>
<comment type="sequence caution" evidence="10">
    <conflict type="erroneous initiation">
        <sequence resource="EMBL-CDS" id="BAA76803"/>
    </conflict>
</comment>
<organism>
    <name type="scientific">Homo sapiens</name>
    <name type="common">Human</name>
    <dbReference type="NCBI Taxonomy" id="9606"/>
    <lineage>
        <taxon>Eukaryota</taxon>
        <taxon>Metazoa</taxon>
        <taxon>Chordata</taxon>
        <taxon>Craniata</taxon>
        <taxon>Vertebrata</taxon>
        <taxon>Euteleostomi</taxon>
        <taxon>Mammalia</taxon>
        <taxon>Eutheria</taxon>
        <taxon>Euarchontoglires</taxon>
        <taxon>Primates</taxon>
        <taxon>Haplorrhini</taxon>
        <taxon>Catarrhini</taxon>
        <taxon>Hominidae</taxon>
        <taxon>Homo</taxon>
    </lineage>
</organism>
<accession>Q9NZL6</accession>
<accession>Q5SXQ2</accession>
<accession>Q5SXQ6</accession>
<accession>Q9HBY3</accession>
<accession>Q9HBY4</accession>
<accession>Q9NZL5</accession>
<accession>Q9UG43</accession>
<accession>Q9Y2G6</accession>
<proteinExistence type="evidence at protein level"/>
<sequence>MKLLWQAKMSSIQDWGEEVEEGAVYHVTLKRVQIQQAANKGARWLGVEGDQLPPGHTVSQYETCKIRTIKAGTLEKLVENLLTAFGDNDFTYISIFLSTYRGFASTKEVLELLLDRYGNLTSPNCEEDGSQSSSESKMVIRNAIASILRAWLDQCAEDFREPPHFPCLQKLLDYLTRMMPGSDPERRAQNLLEQFQKQEVETDNGLPNTISFSLEEEEELEGGESAEFTCFSEDLVAEQLTYMDAQLFKKVVPHHCLGCIWSRRDKKENKHLAPTIRATISQFNTLTKCVVSTILGGKELKTQQRAKIIEKWINIAHECRLLKNFSSLRAIVSALQSNSIYRLKKTWAAVPRDRMLMFEELSDIFSDHNNHLTSRELLMKEGTSKFANLDSSVKENQKRTQRRLQLQKDMGVMQGTVPYLGTFLTDLTMLDTALQDYIEGGLINFEKRRREFEVIAQIKLLQSACNSYCMTPDQKFIQWFQRQQLLTEEESYALSCEIEAAADASTTSPKPRKSMVKRLSLLFLGSDMITSPTPTKEQPKSTASGSSGESMDSVSVSSCESNHSEAEEGSITPMDTPDEPQKKLSESSSSCSSIHSMDTNSSGMSSLINPLSSPPSCNNNPKIHKRSVSVTSITSTVLPPVYNQQNEDTCIIRISVEDNNGNMYKSIMLTSQDKTPAVIQRAMLKHNLDSDPAEEYELVQVISEDKELVIPDSANVFYAMNSQVNFDFILRKKNSMEEQVKLRSRTSLTLPRTAKRGCWSNRHSKITL</sequence>
<name>RGL1_HUMAN</name>
<reference key="1">
    <citation type="journal article" date="2000" name="Biochim. Biophys. Acta">
        <title>The human RGL (RalGDS-like) gene: cloning, expression analysis and genomic organization.</title>
        <authorList>
            <person name="Sood R."/>
            <person name="Makalowska I."/>
            <person name="Carpten J.D."/>
            <person name="Robbins C.M."/>
            <person name="Stephan D.A."/>
            <person name="Connors T.D."/>
            <person name="Morgenbesser S.D."/>
            <person name="Su K."/>
            <person name="Pinkett H.W."/>
            <person name="Graham C.L."/>
            <person name="Quesenberry M.I."/>
            <person name="Baxevanis A.D."/>
            <person name="Klinger K.W."/>
            <person name="Trent J.M."/>
            <person name="Bonner T.I."/>
        </authorList>
    </citation>
    <scope>NUCLEOTIDE SEQUENCE [GENOMIC DNA / MRNA] (ISOFORMS A AND B)</scope>
</reference>
<reference key="2">
    <citation type="journal article" date="1999" name="DNA Res.">
        <title>Prediction of the coding sequences of unidentified human genes. XIII. The complete sequences of 100 new cDNA clones from brain which code for large proteins in vitro.</title>
        <authorList>
            <person name="Nagase T."/>
            <person name="Ishikawa K."/>
            <person name="Suyama M."/>
            <person name="Kikuno R."/>
            <person name="Hirosawa M."/>
            <person name="Miyajima N."/>
            <person name="Tanaka A."/>
            <person name="Kotani H."/>
            <person name="Nomura N."/>
            <person name="Ohara O."/>
        </authorList>
    </citation>
    <scope>NUCLEOTIDE SEQUENCE [LARGE SCALE MRNA] (ISOFORM A)</scope>
    <source>
        <tissue>Brain</tissue>
    </source>
</reference>
<reference key="3">
    <citation type="journal article" date="2006" name="Nature">
        <title>The DNA sequence and biological annotation of human chromosome 1.</title>
        <authorList>
            <person name="Gregory S.G."/>
            <person name="Barlow K.F."/>
            <person name="McLay K.E."/>
            <person name="Kaul R."/>
            <person name="Swarbreck D."/>
            <person name="Dunham A."/>
            <person name="Scott C.E."/>
            <person name="Howe K.L."/>
            <person name="Woodfine K."/>
            <person name="Spencer C.C.A."/>
            <person name="Jones M.C."/>
            <person name="Gillson C."/>
            <person name="Searle S."/>
            <person name="Zhou Y."/>
            <person name="Kokocinski F."/>
            <person name="McDonald L."/>
            <person name="Evans R."/>
            <person name="Phillips K."/>
            <person name="Atkinson A."/>
            <person name="Cooper R."/>
            <person name="Jones C."/>
            <person name="Hall R.E."/>
            <person name="Andrews T.D."/>
            <person name="Lloyd C."/>
            <person name="Ainscough R."/>
            <person name="Almeida J.P."/>
            <person name="Ambrose K.D."/>
            <person name="Anderson F."/>
            <person name="Andrew R.W."/>
            <person name="Ashwell R.I.S."/>
            <person name="Aubin K."/>
            <person name="Babbage A.K."/>
            <person name="Bagguley C.L."/>
            <person name="Bailey J."/>
            <person name="Beasley H."/>
            <person name="Bethel G."/>
            <person name="Bird C.P."/>
            <person name="Bray-Allen S."/>
            <person name="Brown J.Y."/>
            <person name="Brown A.J."/>
            <person name="Buckley D."/>
            <person name="Burton J."/>
            <person name="Bye J."/>
            <person name="Carder C."/>
            <person name="Chapman J.C."/>
            <person name="Clark S.Y."/>
            <person name="Clarke G."/>
            <person name="Clee C."/>
            <person name="Cobley V."/>
            <person name="Collier R.E."/>
            <person name="Corby N."/>
            <person name="Coville G.J."/>
            <person name="Davies J."/>
            <person name="Deadman R."/>
            <person name="Dunn M."/>
            <person name="Earthrowl M."/>
            <person name="Ellington A.G."/>
            <person name="Errington H."/>
            <person name="Frankish A."/>
            <person name="Frankland J."/>
            <person name="French L."/>
            <person name="Garner P."/>
            <person name="Garnett J."/>
            <person name="Gay L."/>
            <person name="Ghori M.R.J."/>
            <person name="Gibson R."/>
            <person name="Gilby L.M."/>
            <person name="Gillett W."/>
            <person name="Glithero R.J."/>
            <person name="Grafham D.V."/>
            <person name="Griffiths C."/>
            <person name="Griffiths-Jones S."/>
            <person name="Grocock R."/>
            <person name="Hammond S."/>
            <person name="Harrison E.S.I."/>
            <person name="Hart E."/>
            <person name="Haugen E."/>
            <person name="Heath P.D."/>
            <person name="Holmes S."/>
            <person name="Holt K."/>
            <person name="Howden P.J."/>
            <person name="Hunt A.R."/>
            <person name="Hunt S.E."/>
            <person name="Hunter G."/>
            <person name="Isherwood J."/>
            <person name="James R."/>
            <person name="Johnson C."/>
            <person name="Johnson D."/>
            <person name="Joy A."/>
            <person name="Kay M."/>
            <person name="Kershaw J.K."/>
            <person name="Kibukawa M."/>
            <person name="Kimberley A.M."/>
            <person name="King A."/>
            <person name="Knights A.J."/>
            <person name="Lad H."/>
            <person name="Laird G."/>
            <person name="Lawlor S."/>
            <person name="Leongamornlert D.A."/>
            <person name="Lloyd D.M."/>
            <person name="Loveland J."/>
            <person name="Lovell J."/>
            <person name="Lush M.J."/>
            <person name="Lyne R."/>
            <person name="Martin S."/>
            <person name="Mashreghi-Mohammadi M."/>
            <person name="Matthews L."/>
            <person name="Matthews N.S.W."/>
            <person name="McLaren S."/>
            <person name="Milne S."/>
            <person name="Mistry S."/>
            <person name="Moore M.J.F."/>
            <person name="Nickerson T."/>
            <person name="O'Dell C.N."/>
            <person name="Oliver K."/>
            <person name="Palmeiri A."/>
            <person name="Palmer S.A."/>
            <person name="Parker A."/>
            <person name="Patel D."/>
            <person name="Pearce A.V."/>
            <person name="Peck A.I."/>
            <person name="Pelan S."/>
            <person name="Phelps K."/>
            <person name="Phillimore B.J."/>
            <person name="Plumb R."/>
            <person name="Rajan J."/>
            <person name="Raymond C."/>
            <person name="Rouse G."/>
            <person name="Saenphimmachak C."/>
            <person name="Sehra H.K."/>
            <person name="Sheridan E."/>
            <person name="Shownkeen R."/>
            <person name="Sims S."/>
            <person name="Skuce C.D."/>
            <person name="Smith M."/>
            <person name="Steward C."/>
            <person name="Subramanian S."/>
            <person name="Sycamore N."/>
            <person name="Tracey A."/>
            <person name="Tromans A."/>
            <person name="Van Helmond Z."/>
            <person name="Wall M."/>
            <person name="Wallis J.M."/>
            <person name="White S."/>
            <person name="Whitehead S.L."/>
            <person name="Wilkinson J.E."/>
            <person name="Willey D.L."/>
            <person name="Williams H."/>
            <person name="Wilming L."/>
            <person name="Wray P.W."/>
            <person name="Wu Z."/>
            <person name="Coulson A."/>
            <person name="Vaudin M."/>
            <person name="Sulston J.E."/>
            <person name="Durbin R.M."/>
            <person name="Hubbard T."/>
            <person name="Wooster R."/>
            <person name="Dunham I."/>
            <person name="Carter N.P."/>
            <person name="McVean G."/>
            <person name="Ross M.T."/>
            <person name="Harrow J."/>
            <person name="Olson M.V."/>
            <person name="Beck S."/>
            <person name="Rogers J."/>
            <person name="Bentley D.R."/>
        </authorList>
    </citation>
    <scope>NUCLEOTIDE SEQUENCE [LARGE SCALE GENOMIC DNA]</scope>
</reference>
<reference key="4">
    <citation type="submission" date="2005-07" db="EMBL/GenBank/DDBJ databases">
        <authorList>
            <person name="Mural R.J."/>
            <person name="Istrail S."/>
            <person name="Sutton G.G."/>
            <person name="Florea L."/>
            <person name="Halpern A.L."/>
            <person name="Mobarry C.M."/>
            <person name="Lippert R."/>
            <person name="Walenz B."/>
            <person name="Shatkay H."/>
            <person name="Dew I."/>
            <person name="Miller J.R."/>
            <person name="Flanigan M.J."/>
            <person name="Edwards N.J."/>
            <person name="Bolanos R."/>
            <person name="Fasulo D."/>
            <person name="Halldorsson B.V."/>
            <person name="Hannenhalli S."/>
            <person name="Turner R."/>
            <person name="Yooseph S."/>
            <person name="Lu F."/>
            <person name="Nusskern D.R."/>
            <person name="Shue B.C."/>
            <person name="Zheng X.H."/>
            <person name="Zhong F."/>
            <person name="Delcher A.L."/>
            <person name="Huson D.H."/>
            <person name="Kravitz S.A."/>
            <person name="Mouchard L."/>
            <person name="Reinert K."/>
            <person name="Remington K.A."/>
            <person name="Clark A.G."/>
            <person name="Waterman M.S."/>
            <person name="Eichler E.E."/>
            <person name="Adams M.D."/>
            <person name="Hunkapiller M.W."/>
            <person name="Myers E.W."/>
            <person name="Venter J.C."/>
        </authorList>
    </citation>
    <scope>NUCLEOTIDE SEQUENCE [LARGE SCALE GENOMIC DNA]</scope>
</reference>
<reference key="5">
    <citation type="journal article" date="2004" name="Genome Res.">
        <title>The status, quality, and expansion of the NIH full-length cDNA project: the Mammalian Gene Collection (MGC).</title>
        <authorList>
            <consortium name="The MGC Project Team"/>
        </authorList>
    </citation>
    <scope>NUCLEOTIDE SEQUENCE [LARGE SCALE MRNA] (ISOFORM B)</scope>
</reference>
<reference key="6">
    <citation type="journal article" date="2007" name="BMC Genomics">
        <title>The full-ORF clone resource of the German cDNA consortium.</title>
        <authorList>
            <person name="Bechtel S."/>
            <person name="Rosenfelder H."/>
            <person name="Duda A."/>
            <person name="Schmidt C.P."/>
            <person name="Ernst U."/>
            <person name="Wellenreuther R."/>
            <person name="Mehrle A."/>
            <person name="Schuster C."/>
            <person name="Bahr A."/>
            <person name="Bloecker H."/>
            <person name="Heubner D."/>
            <person name="Hoerlein A."/>
            <person name="Michel G."/>
            <person name="Wedler H."/>
            <person name="Koehrer K."/>
            <person name="Ottenwaelder B."/>
            <person name="Poustka A."/>
            <person name="Wiemann S."/>
            <person name="Schupp I."/>
        </authorList>
    </citation>
    <scope>NUCLEOTIDE SEQUENCE [LARGE SCALE MRNA] OF 15-768 (ISOFORM A)</scope>
    <source>
        <tissue>Brain</tissue>
    </source>
</reference>
<reference key="7">
    <citation type="journal article" date="2014" name="J. Proteomics">
        <title>An enzyme assisted RP-RPLC approach for in-depth analysis of human liver phosphoproteome.</title>
        <authorList>
            <person name="Bian Y."/>
            <person name="Song C."/>
            <person name="Cheng K."/>
            <person name="Dong M."/>
            <person name="Wang F."/>
            <person name="Huang J."/>
            <person name="Sun D."/>
            <person name="Wang L."/>
            <person name="Ye M."/>
            <person name="Zou H."/>
        </authorList>
    </citation>
    <scope>IDENTIFICATION BY MASS SPECTROMETRY [LARGE SCALE ANALYSIS]</scope>
    <source>
        <tissue>Liver</tissue>
    </source>
</reference>
<reference key="8">
    <citation type="journal article" date="2006" name="Science">
        <title>The consensus coding sequences of human breast and colorectal cancers.</title>
        <authorList>
            <person name="Sjoeblom T."/>
            <person name="Jones S."/>
            <person name="Wood L.D."/>
            <person name="Parsons D.W."/>
            <person name="Lin J."/>
            <person name="Barber T.D."/>
            <person name="Mandelker D."/>
            <person name="Leary R.J."/>
            <person name="Ptak J."/>
            <person name="Silliman N."/>
            <person name="Szabo S."/>
            <person name="Buckhaults P."/>
            <person name="Farrell C."/>
            <person name="Meeh P."/>
            <person name="Markowitz S.D."/>
            <person name="Willis J."/>
            <person name="Dawson D."/>
            <person name="Willson J.K.V."/>
            <person name="Gazdar A.F."/>
            <person name="Hartigan J."/>
            <person name="Wu L."/>
            <person name="Liu C."/>
            <person name="Parmigiani G."/>
            <person name="Park B.H."/>
            <person name="Bachman K.E."/>
            <person name="Papadopoulos N."/>
            <person name="Vogelstein B."/>
            <person name="Kinzler K.W."/>
            <person name="Velculescu V.E."/>
        </authorList>
    </citation>
    <scope>VARIANTS [LARGE SCALE ANALYSIS] SER-174 AND MET-699</scope>
</reference>
<evidence type="ECO:0000250" key="1"/>
<evidence type="ECO:0000250" key="2">
    <source>
        <dbReference type="UniProtKB" id="Q60695"/>
    </source>
</evidence>
<evidence type="ECO:0000255" key="3">
    <source>
        <dbReference type="PROSITE-ProRule" id="PRU00135"/>
    </source>
</evidence>
<evidence type="ECO:0000255" key="4">
    <source>
        <dbReference type="PROSITE-ProRule" id="PRU00166"/>
    </source>
</evidence>
<evidence type="ECO:0000255" key="5">
    <source>
        <dbReference type="PROSITE-ProRule" id="PRU00168"/>
    </source>
</evidence>
<evidence type="ECO:0000256" key="6">
    <source>
        <dbReference type="SAM" id="MobiDB-lite"/>
    </source>
</evidence>
<evidence type="ECO:0000269" key="7">
    <source>
    </source>
</evidence>
<evidence type="ECO:0000303" key="8">
    <source>
    </source>
</evidence>
<evidence type="ECO:0000303" key="9">
    <source>
    </source>
</evidence>
<evidence type="ECO:0000305" key="10"/>
<evidence type="ECO:0007829" key="11">
    <source>
        <dbReference type="PDB" id="7SCW"/>
    </source>
</evidence>
<evidence type="ECO:0007829" key="12">
    <source>
        <dbReference type="PDB" id="7SCX"/>
    </source>
</evidence>
<protein>
    <recommendedName>
        <fullName>Ral guanine nucleotide dissociation stimulator-like 1</fullName>
        <shortName>RalGDS-like 1</shortName>
    </recommendedName>
</protein>